<organism>
    <name type="scientific">Nitratiruptor sp. (strain SB155-2)</name>
    <dbReference type="NCBI Taxonomy" id="387092"/>
    <lineage>
        <taxon>Bacteria</taxon>
        <taxon>Pseudomonadati</taxon>
        <taxon>Campylobacterota</taxon>
        <taxon>Epsilonproteobacteria</taxon>
        <taxon>Nautiliales</taxon>
        <taxon>Nitratiruptoraceae</taxon>
        <taxon>Nitratiruptor</taxon>
    </lineage>
</organism>
<protein>
    <recommendedName>
        <fullName evidence="1">Large ribosomal subunit protein bL28</fullName>
    </recommendedName>
    <alternativeName>
        <fullName evidence="2">50S ribosomal protein L28</fullName>
    </alternativeName>
</protein>
<reference key="1">
    <citation type="journal article" date="2007" name="Proc. Natl. Acad. Sci. U.S.A.">
        <title>Deep-sea vent epsilon-proteobacterial genomes provide insights into emergence of pathogens.</title>
        <authorList>
            <person name="Nakagawa S."/>
            <person name="Takaki Y."/>
            <person name="Shimamura S."/>
            <person name="Reysenbach A.-L."/>
            <person name="Takai K."/>
            <person name="Horikoshi K."/>
        </authorList>
    </citation>
    <scope>NUCLEOTIDE SEQUENCE [LARGE SCALE GENOMIC DNA]</scope>
    <source>
        <strain>SB155-2</strain>
    </source>
</reference>
<keyword id="KW-1185">Reference proteome</keyword>
<keyword id="KW-0687">Ribonucleoprotein</keyword>
<keyword id="KW-0689">Ribosomal protein</keyword>
<evidence type="ECO:0000255" key="1">
    <source>
        <dbReference type="HAMAP-Rule" id="MF_00373"/>
    </source>
</evidence>
<evidence type="ECO:0000305" key="2"/>
<accession>A6Q1S4</accession>
<proteinExistence type="inferred from homology"/>
<feature type="chain" id="PRO_1000007288" description="Large ribosomal subunit protein bL28">
    <location>
        <begin position="1"/>
        <end position="67"/>
    </location>
</feature>
<name>RL28_NITSB</name>
<gene>
    <name evidence="1" type="primary">rpmB</name>
    <name type="ordered locus">NIS_0319</name>
</gene>
<dbReference type="EMBL" id="AP009178">
    <property type="protein sequence ID" value="BAF69433.1"/>
    <property type="molecule type" value="Genomic_DNA"/>
</dbReference>
<dbReference type="RefSeq" id="WP_012081696.1">
    <property type="nucleotide sequence ID" value="NC_009662.1"/>
</dbReference>
<dbReference type="SMR" id="A6Q1S4"/>
<dbReference type="FunCoup" id="A6Q1S4">
    <property type="interactions" value="366"/>
</dbReference>
<dbReference type="STRING" id="387092.NIS_0319"/>
<dbReference type="KEGG" id="nis:NIS_0319"/>
<dbReference type="eggNOG" id="COG0227">
    <property type="taxonomic scope" value="Bacteria"/>
</dbReference>
<dbReference type="HOGENOM" id="CLU_064548_7_2_7"/>
<dbReference type="InParanoid" id="A6Q1S4"/>
<dbReference type="OrthoDB" id="9805609at2"/>
<dbReference type="Proteomes" id="UP000001118">
    <property type="component" value="Chromosome"/>
</dbReference>
<dbReference type="GO" id="GO:1990904">
    <property type="term" value="C:ribonucleoprotein complex"/>
    <property type="evidence" value="ECO:0007669"/>
    <property type="project" value="UniProtKB-KW"/>
</dbReference>
<dbReference type="GO" id="GO:0005840">
    <property type="term" value="C:ribosome"/>
    <property type="evidence" value="ECO:0007669"/>
    <property type="project" value="UniProtKB-KW"/>
</dbReference>
<dbReference type="GO" id="GO:0003735">
    <property type="term" value="F:structural constituent of ribosome"/>
    <property type="evidence" value="ECO:0007669"/>
    <property type="project" value="InterPro"/>
</dbReference>
<dbReference type="GO" id="GO:0006412">
    <property type="term" value="P:translation"/>
    <property type="evidence" value="ECO:0007669"/>
    <property type="project" value="UniProtKB-UniRule"/>
</dbReference>
<dbReference type="Gene3D" id="2.30.170.40">
    <property type="entry name" value="Ribosomal protein L28/L24"/>
    <property type="match status" value="1"/>
</dbReference>
<dbReference type="HAMAP" id="MF_00373">
    <property type="entry name" value="Ribosomal_bL28"/>
    <property type="match status" value="1"/>
</dbReference>
<dbReference type="InterPro" id="IPR050096">
    <property type="entry name" value="Bacterial_rp_bL28"/>
</dbReference>
<dbReference type="InterPro" id="IPR026569">
    <property type="entry name" value="Ribosomal_bL28"/>
</dbReference>
<dbReference type="InterPro" id="IPR034704">
    <property type="entry name" value="Ribosomal_bL28/bL31-like_sf"/>
</dbReference>
<dbReference type="InterPro" id="IPR001383">
    <property type="entry name" value="Ribosomal_bL28_bact-type"/>
</dbReference>
<dbReference type="InterPro" id="IPR037147">
    <property type="entry name" value="Ribosomal_bL28_sf"/>
</dbReference>
<dbReference type="NCBIfam" id="TIGR00009">
    <property type="entry name" value="L28"/>
    <property type="match status" value="1"/>
</dbReference>
<dbReference type="PANTHER" id="PTHR39080">
    <property type="entry name" value="50S RIBOSOMAL PROTEIN L28"/>
    <property type="match status" value="1"/>
</dbReference>
<dbReference type="PANTHER" id="PTHR39080:SF1">
    <property type="entry name" value="LARGE RIBOSOMAL SUBUNIT PROTEIN BL28A"/>
    <property type="match status" value="1"/>
</dbReference>
<dbReference type="Pfam" id="PF00830">
    <property type="entry name" value="Ribosomal_L28"/>
    <property type="match status" value="1"/>
</dbReference>
<dbReference type="SUPFAM" id="SSF143800">
    <property type="entry name" value="L28p-like"/>
    <property type="match status" value="1"/>
</dbReference>
<sequence>MSKKCQVTGKKPITGHNVSHANNKTKRRFLPNIRTVRVTLPDGTKKKIKVSAKGLRILKKKNFQVDL</sequence>
<comment type="similarity">
    <text evidence="1">Belongs to the bacterial ribosomal protein bL28 family.</text>
</comment>